<sequence>MAKLTVKDVELKGKKVLVRVDFNVPIKDGVITNDNRITAALPTIKYILEQGGRAVLFSHLGRVKEEADKAGKSLAPVAKALSEKLGQDVVFPGTTRGAELEAAINELKDGEILLVENTRFEDIDGKKESKNDPELGKYWASLGDGIFVNDAFGTAHRAHASNVGISANVDKAVAGFLLENEIAYIQEAVEAPERPFVAILGGSKVSDKIGVIENLLSKADKVIIGGGMAYTFLKAQGYEIGTSLVEDDKLDLAKELLEKAAGKLILPLDHKVANAFAGYTEVKETADQNIPAGFMGLDVASKTIADYNTQLEGAKTVVWNGPVGVFENTDFQAGTVGLMEAIVKQPGVKSIIGGGDSAAAAINLGYADKFSWISTGGGASMELLEGKVLPGLAALTEK</sequence>
<comment type="catalytic activity">
    <reaction>
        <text>(2R)-3-phosphoglycerate + ATP = (2R)-3-phospho-glyceroyl phosphate + ADP</text>
        <dbReference type="Rhea" id="RHEA:14801"/>
        <dbReference type="ChEBI" id="CHEBI:30616"/>
        <dbReference type="ChEBI" id="CHEBI:57604"/>
        <dbReference type="ChEBI" id="CHEBI:58272"/>
        <dbReference type="ChEBI" id="CHEBI:456216"/>
        <dbReference type="EC" id="2.7.2.3"/>
    </reaction>
</comment>
<comment type="pathway">
    <text>Carbohydrate degradation; glycolysis; pyruvate from D-glyceraldehyde 3-phosphate: step 2/5.</text>
</comment>
<comment type="subunit">
    <text evidence="1">Monomer.</text>
</comment>
<comment type="subcellular location">
    <subcellularLocation>
        <location evidence="2">Cytoplasm</location>
    </subcellularLocation>
</comment>
<comment type="similarity">
    <text evidence="2">Belongs to the phosphoglycerate kinase family.</text>
</comment>
<proteinExistence type="inferred from homology"/>
<gene>
    <name type="primary">pgk</name>
    <name type="ordered locus">LL0245</name>
    <name type="ORF">L0010</name>
</gene>
<protein>
    <recommendedName>
        <fullName>Phosphoglycerate kinase</fullName>
        <ecNumber>2.7.2.3</ecNumber>
    </recommendedName>
</protein>
<name>PGK_LACLA</name>
<keyword id="KW-0067">ATP-binding</keyword>
<keyword id="KW-0963">Cytoplasm</keyword>
<keyword id="KW-0324">Glycolysis</keyword>
<keyword id="KW-0418">Kinase</keyword>
<keyword id="KW-0547">Nucleotide-binding</keyword>
<keyword id="KW-1185">Reference proteome</keyword>
<keyword id="KW-0808">Transferase</keyword>
<dbReference type="EC" id="2.7.2.3"/>
<dbReference type="EMBL" id="AE005176">
    <property type="protein sequence ID" value="AAK04343.1"/>
    <property type="molecule type" value="Genomic_DNA"/>
</dbReference>
<dbReference type="PIR" id="E86655">
    <property type="entry name" value="E86655"/>
</dbReference>
<dbReference type="RefSeq" id="NP_266401.1">
    <property type="nucleotide sequence ID" value="NC_002662.1"/>
</dbReference>
<dbReference type="RefSeq" id="WP_010905233.1">
    <property type="nucleotide sequence ID" value="NC_002662.1"/>
</dbReference>
<dbReference type="SMR" id="Q9CIW1"/>
<dbReference type="PaxDb" id="272623-L0010"/>
<dbReference type="EnsemblBacteria" id="AAK04343">
    <property type="protein sequence ID" value="AAK04343"/>
    <property type="gene ID" value="L0010"/>
</dbReference>
<dbReference type="KEGG" id="lla:L0010"/>
<dbReference type="PATRIC" id="fig|272623.7.peg.270"/>
<dbReference type="eggNOG" id="COG0126">
    <property type="taxonomic scope" value="Bacteria"/>
</dbReference>
<dbReference type="HOGENOM" id="CLU_025427_0_2_9"/>
<dbReference type="OrthoDB" id="9808460at2"/>
<dbReference type="UniPathway" id="UPA00109">
    <property type="reaction ID" value="UER00185"/>
</dbReference>
<dbReference type="Proteomes" id="UP000002196">
    <property type="component" value="Chromosome"/>
</dbReference>
<dbReference type="GO" id="GO:0009986">
    <property type="term" value="C:cell surface"/>
    <property type="evidence" value="ECO:0000314"/>
    <property type="project" value="CAFA"/>
</dbReference>
<dbReference type="GO" id="GO:0005829">
    <property type="term" value="C:cytosol"/>
    <property type="evidence" value="ECO:0007669"/>
    <property type="project" value="TreeGrafter"/>
</dbReference>
<dbReference type="GO" id="GO:0043531">
    <property type="term" value="F:ADP binding"/>
    <property type="evidence" value="ECO:0007669"/>
    <property type="project" value="TreeGrafter"/>
</dbReference>
<dbReference type="GO" id="GO:0005524">
    <property type="term" value="F:ATP binding"/>
    <property type="evidence" value="ECO:0007669"/>
    <property type="project" value="UniProtKB-KW"/>
</dbReference>
<dbReference type="GO" id="GO:2001065">
    <property type="term" value="F:mannan binding"/>
    <property type="evidence" value="ECO:0000314"/>
    <property type="project" value="CAFA"/>
</dbReference>
<dbReference type="GO" id="GO:0004618">
    <property type="term" value="F:phosphoglycerate kinase activity"/>
    <property type="evidence" value="ECO:0007669"/>
    <property type="project" value="UniProtKB-UniRule"/>
</dbReference>
<dbReference type="GO" id="GO:0006094">
    <property type="term" value="P:gluconeogenesis"/>
    <property type="evidence" value="ECO:0007669"/>
    <property type="project" value="TreeGrafter"/>
</dbReference>
<dbReference type="GO" id="GO:0006096">
    <property type="term" value="P:glycolytic process"/>
    <property type="evidence" value="ECO:0007669"/>
    <property type="project" value="UniProtKB-UniRule"/>
</dbReference>
<dbReference type="FunFam" id="3.40.50.1260:FF:000001">
    <property type="entry name" value="Phosphoglycerate kinase"/>
    <property type="match status" value="1"/>
</dbReference>
<dbReference type="FunFam" id="3.40.50.1260:FF:000008">
    <property type="entry name" value="Phosphoglycerate kinase"/>
    <property type="match status" value="1"/>
</dbReference>
<dbReference type="Gene3D" id="3.40.50.1260">
    <property type="entry name" value="Phosphoglycerate kinase, N-terminal domain"/>
    <property type="match status" value="2"/>
</dbReference>
<dbReference type="HAMAP" id="MF_00145">
    <property type="entry name" value="Phosphoglyc_kinase"/>
    <property type="match status" value="1"/>
</dbReference>
<dbReference type="InterPro" id="IPR001576">
    <property type="entry name" value="Phosphoglycerate_kinase"/>
</dbReference>
<dbReference type="InterPro" id="IPR015911">
    <property type="entry name" value="Phosphoglycerate_kinase_CS"/>
</dbReference>
<dbReference type="InterPro" id="IPR015824">
    <property type="entry name" value="Phosphoglycerate_kinase_N"/>
</dbReference>
<dbReference type="InterPro" id="IPR036043">
    <property type="entry name" value="Phosphoglycerate_kinase_sf"/>
</dbReference>
<dbReference type="PANTHER" id="PTHR11406">
    <property type="entry name" value="PHOSPHOGLYCERATE KINASE"/>
    <property type="match status" value="1"/>
</dbReference>
<dbReference type="PANTHER" id="PTHR11406:SF23">
    <property type="entry name" value="PHOSPHOGLYCERATE KINASE 1, CHLOROPLASTIC-RELATED"/>
    <property type="match status" value="1"/>
</dbReference>
<dbReference type="Pfam" id="PF00162">
    <property type="entry name" value="PGK"/>
    <property type="match status" value="1"/>
</dbReference>
<dbReference type="PIRSF" id="PIRSF000724">
    <property type="entry name" value="Pgk"/>
    <property type="match status" value="1"/>
</dbReference>
<dbReference type="PRINTS" id="PR00477">
    <property type="entry name" value="PHGLYCKINASE"/>
</dbReference>
<dbReference type="SUPFAM" id="SSF53748">
    <property type="entry name" value="Phosphoglycerate kinase"/>
    <property type="match status" value="1"/>
</dbReference>
<dbReference type="PROSITE" id="PS00111">
    <property type="entry name" value="PGLYCERATE_KINASE"/>
    <property type="match status" value="1"/>
</dbReference>
<organism>
    <name type="scientific">Lactococcus lactis subsp. lactis (strain IL1403)</name>
    <name type="common">Streptococcus lactis</name>
    <dbReference type="NCBI Taxonomy" id="272623"/>
    <lineage>
        <taxon>Bacteria</taxon>
        <taxon>Bacillati</taxon>
        <taxon>Bacillota</taxon>
        <taxon>Bacilli</taxon>
        <taxon>Lactobacillales</taxon>
        <taxon>Streptococcaceae</taxon>
        <taxon>Lactococcus</taxon>
    </lineage>
</organism>
<evidence type="ECO:0000250" key="1"/>
<evidence type="ECO:0000305" key="2"/>
<feature type="chain" id="PRO_0000145955" description="Phosphoglycerate kinase">
    <location>
        <begin position="1"/>
        <end position="398"/>
    </location>
</feature>
<feature type="binding site" evidence="1">
    <location>
        <begin position="21"/>
        <end position="23"/>
    </location>
    <ligand>
        <name>substrate</name>
    </ligand>
</feature>
<feature type="binding site" evidence="1">
    <location>
        <position position="36"/>
    </location>
    <ligand>
        <name>substrate</name>
    </ligand>
</feature>
<feature type="binding site" evidence="1">
    <location>
        <begin position="59"/>
        <end position="62"/>
    </location>
    <ligand>
        <name>substrate</name>
    </ligand>
</feature>
<feature type="binding site" evidence="1">
    <location>
        <position position="119"/>
    </location>
    <ligand>
        <name>substrate</name>
    </ligand>
</feature>
<feature type="binding site" evidence="1">
    <location>
        <position position="157"/>
    </location>
    <ligand>
        <name>substrate</name>
    </ligand>
</feature>
<feature type="binding site" evidence="1">
    <location>
        <position position="208"/>
    </location>
    <ligand>
        <name>ATP</name>
        <dbReference type="ChEBI" id="CHEBI:30616"/>
    </ligand>
</feature>
<feature type="binding site" evidence="1">
    <location>
        <position position="296"/>
    </location>
    <ligand>
        <name>ATP</name>
        <dbReference type="ChEBI" id="CHEBI:30616"/>
    </ligand>
</feature>
<feature type="binding site" evidence="1">
    <location>
        <position position="327"/>
    </location>
    <ligand>
        <name>ATP</name>
        <dbReference type="ChEBI" id="CHEBI:30616"/>
    </ligand>
</feature>
<feature type="binding site" evidence="1">
    <location>
        <begin position="354"/>
        <end position="357"/>
    </location>
    <ligand>
        <name>ATP</name>
        <dbReference type="ChEBI" id="CHEBI:30616"/>
    </ligand>
</feature>
<reference key="1">
    <citation type="journal article" date="2001" name="Genome Res.">
        <title>The complete genome sequence of the lactic acid bacterium Lactococcus lactis ssp. lactis IL1403.</title>
        <authorList>
            <person name="Bolotin A."/>
            <person name="Wincker P."/>
            <person name="Mauger S."/>
            <person name="Jaillon O."/>
            <person name="Malarme K."/>
            <person name="Weissenbach J."/>
            <person name="Ehrlich S.D."/>
            <person name="Sorokin A."/>
        </authorList>
    </citation>
    <scope>NUCLEOTIDE SEQUENCE [LARGE SCALE GENOMIC DNA]</scope>
    <source>
        <strain>IL1403</strain>
    </source>
</reference>
<accession>Q9CIW1</accession>